<evidence type="ECO:0000255" key="1">
    <source>
        <dbReference type="HAMAP-Rule" id="MF_01345"/>
    </source>
</evidence>
<evidence type="ECO:0000305" key="2"/>
<keyword id="KW-0687">Ribonucleoprotein</keyword>
<keyword id="KW-0689">Ribosomal protein</keyword>
<keyword id="KW-0694">RNA-binding</keyword>
<keyword id="KW-0699">rRNA-binding</keyword>
<comment type="function">
    <text evidence="1">One of the primary rRNA binding proteins, it binds specifically to the 5'-end of 16S ribosomal RNA.</text>
</comment>
<comment type="subunit">
    <text evidence="1">Part of the 30S ribosomal subunit.</text>
</comment>
<comment type="similarity">
    <text evidence="1">Belongs to the universal ribosomal protein uS17 family.</text>
</comment>
<gene>
    <name evidence="1" type="primary">rpsQ</name>
    <name type="ordered locus">A1I_02080</name>
</gene>
<name>RS17_RICB8</name>
<dbReference type="EMBL" id="CP000849">
    <property type="protein sequence ID" value="ABV78800.1"/>
    <property type="molecule type" value="Genomic_DNA"/>
</dbReference>
<dbReference type="RefSeq" id="WP_011477712.1">
    <property type="nucleotide sequence ID" value="NC_009883.1"/>
</dbReference>
<dbReference type="SMR" id="A8GVC3"/>
<dbReference type="KEGG" id="rbo:A1I_02080"/>
<dbReference type="HOGENOM" id="CLU_073626_1_1_5"/>
<dbReference type="GO" id="GO:0022627">
    <property type="term" value="C:cytosolic small ribosomal subunit"/>
    <property type="evidence" value="ECO:0007669"/>
    <property type="project" value="TreeGrafter"/>
</dbReference>
<dbReference type="GO" id="GO:0019843">
    <property type="term" value="F:rRNA binding"/>
    <property type="evidence" value="ECO:0007669"/>
    <property type="project" value="UniProtKB-UniRule"/>
</dbReference>
<dbReference type="GO" id="GO:0003735">
    <property type="term" value="F:structural constituent of ribosome"/>
    <property type="evidence" value="ECO:0007669"/>
    <property type="project" value="InterPro"/>
</dbReference>
<dbReference type="GO" id="GO:0006412">
    <property type="term" value="P:translation"/>
    <property type="evidence" value="ECO:0007669"/>
    <property type="project" value="UniProtKB-UniRule"/>
</dbReference>
<dbReference type="CDD" id="cd00364">
    <property type="entry name" value="Ribosomal_uS17"/>
    <property type="match status" value="1"/>
</dbReference>
<dbReference type="Gene3D" id="2.40.50.140">
    <property type="entry name" value="Nucleic acid-binding proteins"/>
    <property type="match status" value="1"/>
</dbReference>
<dbReference type="HAMAP" id="MF_01345_B">
    <property type="entry name" value="Ribosomal_uS17_B"/>
    <property type="match status" value="1"/>
</dbReference>
<dbReference type="InterPro" id="IPR012340">
    <property type="entry name" value="NA-bd_OB-fold"/>
</dbReference>
<dbReference type="InterPro" id="IPR000266">
    <property type="entry name" value="Ribosomal_uS17"/>
</dbReference>
<dbReference type="InterPro" id="IPR019984">
    <property type="entry name" value="Ribosomal_uS17_bact/chlr"/>
</dbReference>
<dbReference type="InterPro" id="IPR019979">
    <property type="entry name" value="Ribosomal_uS17_CS"/>
</dbReference>
<dbReference type="NCBIfam" id="NF004123">
    <property type="entry name" value="PRK05610.1"/>
    <property type="match status" value="1"/>
</dbReference>
<dbReference type="NCBIfam" id="TIGR03635">
    <property type="entry name" value="uS17_bact"/>
    <property type="match status" value="1"/>
</dbReference>
<dbReference type="PANTHER" id="PTHR10744">
    <property type="entry name" value="40S RIBOSOMAL PROTEIN S11 FAMILY MEMBER"/>
    <property type="match status" value="1"/>
</dbReference>
<dbReference type="PANTHER" id="PTHR10744:SF1">
    <property type="entry name" value="SMALL RIBOSOMAL SUBUNIT PROTEIN US17M"/>
    <property type="match status" value="1"/>
</dbReference>
<dbReference type="Pfam" id="PF00366">
    <property type="entry name" value="Ribosomal_S17"/>
    <property type="match status" value="1"/>
</dbReference>
<dbReference type="PRINTS" id="PR00973">
    <property type="entry name" value="RIBOSOMALS17"/>
</dbReference>
<dbReference type="SUPFAM" id="SSF50249">
    <property type="entry name" value="Nucleic acid-binding proteins"/>
    <property type="match status" value="1"/>
</dbReference>
<dbReference type="PROSITE" id="PS00056">
    <property type="entry name" value="RIBOSOMAL_S17"/>
    <property type="match status" value="1"/>
</dbReference>
<reference key="1">
    <citation type="submission" date="2007-09" db="EMBL/GenBank/DDBJ databases">
        <title>Complete genome sequencing of Rickettsia bellii.</title>
        <authorList>
            <person name="Madan A."/>
            <person name="Lee H."/>
            <person name="Madan A."/>
            <person name="Yoon J.-G."/>
            <person name="Ryu G.-Y."/>
            <person name="Dasch G."/>
            <person name="Ereemeva M."/>
        </authorList>
    </citation>
    <scope>NUCLEOTIDE SEQUENCE [LARGE SCALE GENOMIC DNA]</scope>
    <source>
        <strain>OSU 85-389</strain>
    </source>
</reference>
<sequence>MPKRVLQGVVISSKTDKTVTVKVERRFKHPIYKKFIKVSKKYAAHDPNNKFQEGDKVNIIESRPISKTKTWVVINEE</sequence>
<organism>
    <name type="scientific">Rickettsia bellii (strain OSU 85-389)</name>
    <dbReference type="NCBI Taxonomy" id="391896"/>
    <lineage>
        <taxon>Bacteria</taxon>
        <taxon>Pseudomonadati</taxon>
        <taxon>Pseudomonadota</taxon>
        <taxon>Alphaproteobacteria</taxon>
        <taxon>Rickettsiales</taxon>
        <taxon>Rickettsiaceae</taxon>
        <taxon>Rickettsieae</taxon>
        <taxon>Rickettsia</taxon>
        <taxon>belli group</taxon>
    </lineage>
</organism>
<accession>A8GVC3</accession>
<protein>
    <recommendedName>
        <fullName evidence="1">Small ribosomal subunit protein uS17</fullName>
    </recommendedName>
    <alternativeName>
        <fullName evidence="2">30S ribosomal protein S17</fullName>
    </alternativeName>
</protein>
<feature type="chain" id="PRO_1000055010" description="Small ribosomal subunit protein uS17">
    <location>
        <begin position="1"/>
        <end position="77"/>
    </location>
</feature>
<proteinExistence type="inferred from homology"/>